<gene>
    <name evidence="1" type="primary">glsA</name>
    <name type="ordered locus">PSPA7_3635</name>
</gene>
<proteinExistence type="inferred from homology"/>
<sequence length="302" mass="33027">MQQLLNEILDEVRPLIGRGKVADYIPALAGVEPDQLGIAVYSRDGELFHAGDALRPFSIQSISKVFSLVQAIQHSGEDIWQRLGHEPSGQPFNSLVQLEFERGRPRNPFINAGALVICDINQSRFAAPAQSMRDFVRRLCGNPEVVSDSVVARSEYQHRSRNAAAAYLMKSFGNFHNDVEAVLLSYFHHCALRMSCVDLARAFCFLADKGFCKHSGEQVLNERQTKQVNAIMATSGLYDEAGNFAYRVGLPGKSGVGGGIIAVVPGRFTVCVWSPELNGAGNSLAGIAALEKLSERIGWSIF</sequence>
<accession>A6V7F4</accession>
<keyword id="KW-0378">Hydrolase</keyword>
<feature type="chain" id="PRO_0000336035" description="Glutaminase">
    <location>
        <begin position="1"/>
        <end position="302"/>
    </location>
</feature>
<feature type="binding site" evidence="1">
    <location>
        <position position="61"/>
    </location>
    <ligand>
        <name>substrate</name>
    </ligand>
</feature>
<feature type="binding site" evidence="1">
    <location>
        <position position="111"/>
    </location>
    <ligand>
        <name>substrate</name>
    </ligand>
</feature>
<feature type="binding site" evidence="1">
    <location>
        <position position="155"/>
    </location>
    <ligand>
        <name>substrate</name>
    </ligand>
</feature>
<feature type="binding site" evidence="1">
    <location>
        <position position="162"/>
    </location>
    <ligand>
        <name>substrate</name>
    </ligand>
</feature>
<feature type="binding site" evidence="1">
    <location>
        <position position="186"/>
    </location>
    <ligand>
        <name>substrate</name>
    </ligand>
</feature>
<feature type="binding site" evidence="1">
    <location>
        <position position="238"/>
    </location>
    <ligand>
        <name>substrate</name>
    </ligand>
</feature>
<feature type="binding site" evidence="1">
    <location>
        <position position="256"/>
    </location>
    <ligand>
        <name>substrate</name>
    </ligand>
</feature>
<comment type="catalytic activity">
    <reaction evidence="1">
        <text>L-glutamine + H2O = L-glutamate + NH4(+)</text>
        <dbReference type="Rhea" id="RHEA:15889"/>
        <dbReference type="ChEBI" id="CHEBI:15377"/>
        <dbReference type="ChEBI" id="CHEBI:28938"/>
        <dbReference type="ChEBI" id="CHEBI:29985"/>
        <dbReference type="ChEBI" id="CHEBI:58359"/>
        <dbReference type="EC" id="3.5.1.2"/>
    </reaction>
</comment>
<comment type="subunit">
    <text evidence="1">Homotetramer.</text>
</comment>
<comment type="similarity">
    <text evidence="1">Belongs to the glutaminase family.</text>
</comment>
<comment type="sequence caution" evidence="2">
    <conflict type="erroneous initiation">
        <sequence resource="EMBL-CDS" id="ABR84204"/>
    </conflict>
</comment>
<protein>
    <recommendedName>
        <fullName evidence="1">Glutaminase</fullName>
        <ecNumber evidence="1">3.5.1.2</ecNumber>
    </recommendedName>
</protein>
<dbReference type="EC" id="3.5.1.2" evidence="1"/>
<dbReference type="EMBL" id="CP000744">
    <property type="protein sequence ID" value="ABR84204.1"/>
    <property type="status" value="ALT_INIT"/>
    <property type="molecule type" value="Genomic_DNA"/>
</dbReference>
<dbReference type="RefSeq" id="WP_034000544.1">
    <property type="nucleotide sequence ID" value="NC_009656.1"/>
</dbReference>
<dbReference type="SMR" id="A6V7F4"/>
<dbReference type="GeneID" id="77221741"/>
<dbReference type="KEGG" id="pap:PSPA7_3635"/>
<dbReference type="HOGENOM" id="CLU_027932_1_1_6"/>
<dbReference type="Proteomes" id="UP000001582">
    <property type="component" value="Chromosome"/>
</dbReference>
<dbReference type="GO" id="GO:0004359">
    <property type="term" value="F:glutaminase activity"/>
    <property type="evidence" value="ECO:0007669"/>
    <property type="project" value="UniProtKB-UniRule"/>
</dbReference>
<dbReference type="GO" id="GO:0006537">
    <property type="term" value="P:glutamate biosynthetic process"/>
    <property type="evidence" value="ECO:0007669"/>
    <property type="project" value="TreeGrafter"/>
</dbReference>
<dbReference type="GO" id="GO:0006543">
    <property type="term" value="P:glutamine catabolic process"/>
    <property type="evidence" value="ECO:0007669"/>
    <property type="project" value="TreeGrafter"/>
</dbReference>
<dbReference type="FunFam" id="3.40.710.10:FF:000005">
    <property type="entry name" value="Glutaminase"/>
    <property type="match status" value="1"/>
</dbReference>
<dbReference type="Gene3D" id="3.40.710.10">
    <property type="entry name" value="DD-peptidase/beta-lactamase superfamily"/>
    <property type="match status" value="1"/>
</dbReference>
<dbReference type="HAMAP" id="MF_00313">
    <property type="entry name" value="Glutaminase"/>
    <property type="match status" value="1"/>
</dbReference>
<dbReference type="InterPro" id="IPR012338">
    <property type="entry name" value="Beta-lactam/transpept-like"/>
</dbReference>
<dbReference type="InterPro" id="IPR015868">
    <property type="entry name" value="Glutaminase"/>
</dbReference>
<dbReference type="NCBIfam" id="TIGR03814">
    <property type="entry name" value="Gln_ase"/>
    <property type="match status" value="1"/>
</dbReference>
<dbReference type="NCBIfam" id="NF002132">
    <property type="entry name" value="PRK00971.1-1"/>
    <property type="match status" value="1"/>
</dbReference>
<dbReference type="NCBIfam" id="NF002133">
    <property type="entry name" value="PRK00971.1-2"/>
    <property type="match status" value="1"/>
</dbReference>
<dbReference type="PANTHER" id="PTHR12544">
    <property type="entry name" value="GLUTAMINASE"/>
    <property type="match status" value="1"/>
</dbReference>
<dbReference type="PANTHER" id="PTHR12544:SF29">
    <property type="entry name" value="GLUTAMINASE"/>
    <property type="match status" value="1"/>
</dbReference>
<dbReference type="Pfam" id="PF04960">
    <property type="entry name" value="Glutaminase"/>
    <property type="match status" value="1"/>
</dbReference>
<dbReference type="SUPFAM" id="SSF56601">
    <property type="entry name" value="beta-lactamase/transpeptidase-like"/>
    <property type="match status" value="1"/>
</dbReference>
<organism>
    <name type="scientific">Pseudomonas paraeruginosa (strain DSM 24068 / PA7)</name>
    <name type="common">Pseudomonas aeruginosa (strain PA7)</name>
    <dbReference type="NCBI Taxonomy" id="381754"/>
    <lineage>
        <taxon>Bacteria</taxon>
        <taxon>Pseudomonadati</taxon>
        <taxon>Pseudomonadota</taxon>
        <taxon>Gammaproteobacteria</taxon>
        <taxon>Pseudomonadales</taxon>
        <taxon>Pseudomonadaceae</taxon>
        <taxon>Pseudomonas</taxon>
        <taxon>Pseudomonas paraeruginosa</taxon>
    </lineage>
</organism>
<evidence type="ECO:0000255" key="1">
    <source>
        <dbReference type="HAMAP-Rule" id="MF_00313"/>
    </source>
</evidence>
<evidence type="ECO:0000305" key="2"/>
<reference key="1">
    <citation type="submission" date="2007-06" db="EMBL/GenBank/DDBJ databases">
        <authorList>
            <person name="Dodson R.J."/>
            <person name="Harkins D."/>
            <person name="Paulsen I.T."/>
        </authorList>
    </citation>
    <scope>NUCLEOTIDE SEQUENCE [LARGE SCALE GENOMIC DNA]</scope>
    <source>
        <strain>DSM 24068 / PA7</strain>
    </source>
</reference>
<name>GLSA_PSEP7</name>